<organism>
    <name type="scientific">Cryptophis nigrescens</name>
    <name type="common">Eastern small-eyed snake</name>
    <name type="synonym">Rhinoplocephalus nigrescens</name>
    <dbReference type="NCBI Taxonomy" id="292442"/>
    <lineage>
        <taxon>Eukaryota</taxon>
        <taxon>Metazoa</taxon>
        <taxon>Chordata</taxon>
        <taxon>Craniata</taxon>
        <taxon>Vertebrata</taxon>
        <taxon>Euteleostomi</taxon>
        <taxon>Lepidosauria</taxon>
        <taxon>Squamata</taxon>
        <taxon>Bifurcata</taxon>
        <taxon>Unidentata</taxon>
        <taxon>Episquamata</taxon>
        <taxon>Toxicofera</taxon>
        <taxon>Serpentes</taxon>
        <taxon>Colubroidea</taxon>
        <taxon>Elapidae</taxon>
        <taxon>Hydrophiinae</taxon>
        <taxon>Cryptophis</taxon>
    </lineage>
</organism>
<keyword id="KW-1015">Disulfide bond</keyword>
<keyword id="KW-0382">Hypotensive agent</keyword>
<keyword id="KW-0964">Secreted</keyword>
<keyword id="KW-0800">Toxin</keyword>
<keyword id="KW-0838">Vasoactive</keyword>
<keyword id="KW-0840">Vasodilator</keyword>
<feature type="propeptide" id="PRO_0000459641" evidence="4">
    <location>
        <begin position="1" status="less than"/>
        <end position="8"/>
    </location>
</feature>
<feature type="peptide" id="PRO_0000342432" description="Natriuretic peptide CnNP-a" evidence="2">
    <location>
        <begin position="9"/>
        <end position="39"/>
    </location>
</feature>
<feature type="disulfide bond" evidence="2">
    <location>
        <begin position="12"/>
        <end position="28"/>
    </location>
</feature>
<feature type="non-terminal residue">
    <location>
        <position position="1"/>
    </location>
</feature>
<name>VNPA_CRYNI</name>
<proteinExistence type="evidence at transcript level"/>
<evidence type="ECO:0000250" key="1">
    <source>
        <dbReference type="UniProtKB" id="C6EVG7"/>
    </source>
</evidence>
<evidence type="ECO:0000250" key="2">
    <source>
        <dbReference type="UniProtKB" id="Q3SAE9"/>
    </source>
</evidence>
<evidence type="ECO:0000303" key="3">
    <source>
    </source>
</evidence>
<evidence type="ECO:0000305" key="4"/>
<evidence type="ECO:0000305" key="5">
    <source>
    </source>
</evidence>
<comment type="function">
    <text evidence="1 2">Snake venom natriuretic peptide that targets both NPR1 and NPR2 (By similarity). Exhibits hypotensive and vasodepressor activities (By similarity).</text>
</comment>
<comment type="subcellular location">
    <subcellularLocation>
        <location evidence="5">Secreted</location>
    </subcellularLocation>
</comment>
<comment type="tissue specificity">
    <text evidence="5">Expressed by the venom gland.</text>
</comment>
<comment type="similarity">
    <text evidence="4">Belongs to the natriuretic peptide family.</text>
</comment>
<protein>
    <recommendedName>
        <fullName evidence="3">Natriuretic peptide CnNP-a</fullName>
    </recommendedName>
</protein>
<accession>Q1ZYW1</accession>
<dbReference type="EMBL" id="DQ420642">
    <property type="protein sequence ID" value="ABD83626.1"/>
    <property type="molecule type" value="mRNA"/>
</dbReference>
<dbReference type="GO" id="GO:0005576">
    <property type="term" value="C:extracellular region"/>
    <property type="evidence" value="ECO:0007669"/>
    <property type="project" value="UniProtKB-SubCell"/>
</dbReference>
<dbReference type="GO" id="GO:0005179">
    <property type="term" value="F:hormone activity"/>
    <property type="evidence" value="ECO:0007669"/>
    <property type="project" value="InterPro"/>
</dbReference>
<dbReference type="GO" id="GO:0090729">
    <property type="term" value="F:toxin activity"/>
    <property type="evidence" value="ECO:0007669"/>
    <property type="project" value="UniProtKB-KW"/>
</dbReference>
<dbReference type="GO" id="GO:0008217">
    <property type="term" value="P:regulation of blood pressure"/>
    <property type="evidence" value="ECO:0007669"/>
    <property type="project" value="UniProtKB-KW"/>
</dbReference>
<dbReference type="GO" id="GO:0042311">
    <property type="term" value="P:vasodilation"/>
    <property type="evidence" value="ECO:0007669"/>
    <property type="project" value="UniProtKB-KW"/>
</dbReference>
<dbReference type="InterPro" id="IPR000663">
    <property type="entry name" value="Natr_peptide"/>
</dbReference>
<dbReference type="InterPro" id="IPR030480">
    <property type="entry name" value="Natr_peptide_CS"/>
</dbReference>
<dbReference type="InterPro" id="IPR002408">
    <property type="entry name" value="Natriuretic_peptide_brain"/>
</dbReference>
<dbReference type="Pfam" id="PF00212">
    <property type="entry name" value="ANP"/>
    <property type="match status" value="1"/>
</dbReference>
<dbReference type="PRINTS" id="PR00712">
    <property type="entry name" value="BNATPEPTIDE"/>
</dbReference>
<dbReference type="PRINTS" id="PR00710">
    <property type="entry name" value="NATPEPTIDES"/>
</dbReference>
<dbReference type="SMART" id="SM00183">
    <property type="entry name" value="NAT_PEP"/>
    <property type="match status" value="1"/>
</dbReference>
<dbReference type="PROSITE" id="PS00263">
    <property type="entry name" value="NATRIURETIC_PEPTIDE"/>
    <property type="match status" value="1"/>
</dbReference>
<sequence>SGSKTAKIGDGCFGVRIDRIGSTSGMGCGGVPKPTPGGS</sequence>
<reference key="1">
    <citation type="journal article" date="2006" name="Biochimie">
        <title>Cloning and characterisation of natriuretic peptides from the venom glands of Australian elapids.</title>
        <authorList>
            <person name="St Pierre L."/>
            <person name="Flight S."/>
            <person name="Masci P.P."/>
            <person name="Hanchard K.J."/>
            <person name="Lewis R.J."/>
            <person name="Alewood P.F."/>
            <person name="de Jersey J."/>
            <person name="Lavin M.F."/>
        </authorList>
    </citation>
    <scope>NUCLEOTIDE SEQUENCE [MRNA]</scope>
    <source>
        <tissue>Venom gland</tissue>
    </source>
</reference>